<evidence type="ECO:0000255" key="1">
    <source>
        <dbReference type="HAMAP-Rule" id="MF_00004"/>
    </source>
</evidence>
<proteinExistence type="inferred from homology"/>
<sequence length="172" mass="19140">MDLKQYVSEVQDWPKEGVDFKDITTIMDNGEAYGYATDQIVEFAREKEVDIVVGPEARGFIIGCPVAYSMGIGFAPVRKEGKLPREVIRYEYDLEYGTNVLTMHKDAIKPGQRVLITDDLLATGGTIEATIKLVEELGGIVVGIAFIIELKYLHGIDKLDGYDVLSLISYDE</sequence>
<protein>
    <recommendedName>
        <fullName evidence="1">Adenine phosphoribosyltransferase</fullName>
        <shortName evidence="1">APRT</shortName>
        <ecNumber evidence="1">2.4.2.7</ecNumber>
    </recommendedName>
</protein>
<keyword id="KW-0963">Cytoplasm</keyword>
<keyword id="KW-0328">Glycosyltransferase</keyword>
<keyword id="KW-0660">Purine salvage</keyword>
<keyword id="KW-1185">Reference proteome</keyword>
<keyword id="KW-0808">Transferase</keyword>
<feature type="chain" id="PRO_1000116256" description="Adenine phosphoribosyltransferase">
    <location>
        <begin position="1"/>
        <end position="172"/>
    </location>
</feature>
<gene>
    <name evidence="1" type="primary">apt</name>
    <name type="ordered locus">Sca_1246</name>
</gene>
<organism>
    <name type="scientific">Staphylococcus carnosus (strain TM300)</name>
    <dbReference type="NCBI Taxonomy" id="396513"/>
    <lineage>
        <taxon>Bacteria</taxon>
        <taxon>Bacillati</taxon>
        <taxon>Bacillota</taxon>
        <taxon>Bacilli</taxon>
        <taxon>Bacillales</taxon>
        <taxon>Staphylococcaceae</taxon>
        <taxon>Staphylococcus</taxon>
    </lineage>
</organism>
<dbReference type="EC" id="2.4.2.7" evidence="1"/>
<dbReference type="EMBL" id="AM295250">
    <property type="protein sequence ID" value="CAL28153.1"/>
    <property type="molecule type" value="Genomic_DNA"/>
</dbReference>
<dbReference type="RefSeq" id="WP_015900493.1">
    <property type="nucleotide sequence ID" value="NC_012121.1"/>
</dbReference>
<dbReference type="SMR" id="B9DNG3"/>
<dbReference type="GeneID" id="93793672"/>
<dbReference type="KEGG" id="sca:SCA_1246"/>
<dbReference type="eggNOG" id="COG0503">
    <property type="taxonomic scope" value="Bacteria"/>
</dbReference>
<dbReference type="HOGENOM" id="CLU_063339_3_0_9"/>
<dbReference type="OrthoDB" id="9803963at2"/>
<dbReference type="BioCyc" id="SCAR396513:SCA_RS06230-MONOMER"/>
<dbReference type="UniPathway" id="UPA00588">
    <property type="reaction ID" value="UER00646"/>
</dbReference>
<dbReference type="Proteomes" id="UP000000444">
    <property type="component" value="Chromosome"/>
</dbReference>
<dbReference type="GO" id="GO:0005737">
    <property type="term" value="C:cytoplasm"/>
    <property type="evidence" value="ECO:0007669"/>
    <property type="project" value="UniProtKB-SubCell"/>
</dbReference>
<dbReference type="GO" id="GO:0002055">
    <property type="term" value="F:adenine binding"/>
    <property type="evidence" value="ECO:0007669"/>
    <property type="project" value="TreeGrafter"/>
</dbReference>
<dbReference type="GO" id="GO:0003999">
    <property type="term" value="F:adenine phosphoribosyltransferase activity"/>
    <property type="evidence" value="ECO:0007669"/>
    <property type="project" value="UniProtKB-UniRule"/>
</dbReference>
<dbReference type="GO" id="GO:0016208">
    <property type="term" value="F:AMP binding"/>
    <property type="evidence" value="ECO:0007669"/>
    <property type="project" value="TreeGrafter"/>
</dbReference>
<dbReference type="GO" id="GO:0006168">
    <property type="term" value="P:adenine salvage"/>
    <property type="evidence" value="ECO:0007669"/>
    <property type="project" value="InterPro"/>
</dbReference>
<dbReference type="GO" id="GO:0044209">
    <property type="term" value="P:AMP salvage"/>
    <property type="evidence" value="ECO:0007669"/>
    <property type="project" value="UniProtKB-UniRule"/>
</dbReference>
<dbReference type="GO" id="GO:0006166">
    <property type="term" value="P:purine ribonucleoside salvage"/>
    <property type="evidence" value="ECO:0007669"/>
    <property type="project" value="UniProtKB-KW"/>
</dbReference>
<dbReference type="CDD" id="cd06223">
    <property type="entry name" value="PRTases_typeI"/>
    <property type="match status" value="1"/>
</dbReference>
<dbReference type="FunFam" id="3.40.50.2020:FF:000004">
    <property type="entry name" value="Adenine phosphoribosyltransferase"/>
    <property type="match status" value="1"/>
</dbReference>
<dbReference type="Gene3D" id="3.40.50.2020">
    <property type="match status" value="1"/>
</dbReference>
<dbReference type="HAMAP" id="MF_00004">
    <property type="entry name" value="Aden_phosphoribosyltr"/>
    <property type="match status" value="1"/>
</dbReference>
<dbReference type="InterPro" id="IPR005764">
    <property type="entry name" value="Ade_phspho_trans"/>
</dbReference>
<dbReference type="InterPro" id="IPR000836">
    <property type="entry name" value="PRibTrfase_dom"/>
</dbReference>
<dbReference type="InterPro" id="IPR029057">
    <property type="entry name" value="PRTase-like"/>
</dbReference>
<dbReference type="InterPro" id="IPR050054">
    <property type="entry name" value="UPRTase/APRTase"/>
</dbReference>
<dbReference type="NCBIfam" id="TIGR01090">
    <property type="entry name" value="apt"/>
    <property type="match status" value="1"/>
</dbReference>
<dbReference type="NCBIfam" id="NF002633">
    <property type="entry name" value="PRK02304.1-2"/>
    <property type="match status" value="1"/>
</dbReference>
<dbReference type="NCBIfam" id="NF002634">
    <property type="entry name" value="PRK02304.1-3"/>
    <property type="match status" value="1"/>
</dbReference>
<dbReference type="NCBIfam" id="NF002636">
    <property type="entry name" value="PRK02304.1-5"/>
    <property type="match status" value="1"/>
</dbReference>
<dbReference type="PANTHER" id="PTHR32315">
    <property type="entry name" value="ADENINE PHOSPHORIBOSYLTRANSFERASE"/>
    <property type="match status" value="1"/>
</dbReference>
<dbReference type="PANTHER" id="PTHR32315:SF3">
    <property type="entry name" value="ADENINE PHOSPHORIBOSYLTRANSFERASE"/>
    <property type="match status" value="1"/>
</dbReference>
<dbReference type="Pfam" id="PF00156">
    <property type="entry name" value="Pribosyltran"/>
    <property type="match status" value="1"/>
</dbReference>
<dbReference type="SUPFAM" id="SSF53271">
    <property type="entry name" value="PRTase-like"/>
    <property type="match status" value="1"/>
</dbReference>
<comment type="function">
    <text evidence="1">Catalyzes a salvage reaction resulting in the formation of AMP, that is energically less costly than de novo synthesis.</text>
</comment>
<comment type="catalytic activity">
    <reaction evidence="1">
        <text>AMP + diphosphate = 5-phospho-alpha-D-ribose 1-diphosphate + adenine</text>
        <dbReference type="Rhea" id="RHEA:16609"/>
        <dbReference type="ChEBI" id="CHEBI:16708"/>
        <dbReference type="ChEBI" id="CHEBI:33019"/>
        <dbReference type="ChEBI" id="CHEBI:58017"/>
        <dbReference type="ChEBI" id="CHEBI:456215"/>
        <dbReference type="EC" id="2.4.2.7"/>
    </reaction>
</comment>
<comment type="pathway">
    <text evidence="1">Purine metabolism; AMP biosynthesis via salvage pathway; AMP from adenine: step 1/1.</text>
</comment>
<comment type="subunit">
    <text evidence="1">Homodimer.</text>
</comment>
<comment type="subcellular location">
    <subcellularLocation>
        <location evidence="1">Cytoplasm</location>
    </subcellularLocation>
</comment>
<comment type="similarity">
    <text evidence="1">Belongs to the purine/pyrimidine phosphoribosyltransferase family.</text>
</comment>
<name>APT_STACT</name>
<accession>B9DNG3</accession>
<reference key="1">
    <citation type="journal article" date="2009" name="Appl. Environ. Microbiol.">
        <title>Genome analysis of the meat starter culture bacterium Staphylococcus carnosus TM300.</title>
        <authorList>
            <person name="Rosenstein R."/>
            <person name="Nerz C."/>
            <person name="Biswas L."/>
            <person name="Resch A."/>
            <person name="Raddatz G."/>
            <person name="Schuster S.C."/>
            <person name="Goetz F."/>
        </authorList>
    </citation>
    <scope>NUCLEOTIDE SEQUENCE [LARGE SCALE GENOMIC DNA]</scope>
    <source>
        <strain>TM300</strain>
    </source>
</reference>